<sequence length="360" mass="38548">MLTWLTQFSPHFQPLNLFRYITFRTGGATATALFFVFFFGPRIIAALRIKQGKGQPIRLDGPQSHLLTKKGTPTMGGLMILSGLIVSTLLWANLRNHYVWVVLFVTTGFGLIGFYDDYLKVSKQSHKGFPGRIRLLLEVGIAGAACYAMMLLGTPHTTSLAFPAINGFAVDLGLFFLVVGPFVIVSAGNAVNLTDGLDGLAIVPVMIAAGTFGVIAYLAGNAIFSTYLGINFVPGAGELSVVTGAVIGAGLGFLWFNAPPAQIFMGDTGSLALGGLLGAVAVAVKHEIVLAIVGGLFVLETLSVIVQVISFKLTGRRVFKMAPIHHHFEQLGWSEPQVVVRFWIIAFVLALIGLSTLKLR</sequence>
<reference key="1">
    <citation type="journal article" date="2010" name="J. Bacteriol.">
        <title>Complete genome sequence of the aerobic facultative methanotroph Methylocella silvestris BL2.</title>
        <authorList>
            <person name="Chen Y."/>
            <person name="Crombie A."/>
            <person name="Rahman M.T."/>
            <person name="Dedysh S.N."/>
            <person name="Liesack W."/>
            <person name="Stott M.B."/>
            <person name="Alam M."/>
            <person name="Theisen A.R."/>
            <person name="Murrell J.C."/>
            <person name="Dunfield P.F."/>
        </authorList>
    </citation>
    <scope>NUCLEOTIDE SEQUENCE [LARGE SCALE GENOMIC DNA]</scope>
    <source>
        <strain>DSM 15510 / CIP 108128 / LMG 27833 / NCIMB 13906 / BL2</strain>
    </source>
</reference>
<organism>
    <name type="scientific">Methylocella silvestris (strain DSM 15510 / CIP 108128 / LMG 27833 / NCIMB 13906 / BL2)</name>
    <dbReference type="NCBI Taxonomy" id="395965"/>
    <lineage>
        <taxon>Bacteria</taxon>
        <taxon>Pseudomonadati</taxon>
        <taxon>Pseudomonadota</taxon>
        <taxon>Alphaproteobacteria</taxon>
        <taxon>Hyphomicrobiales</taxon>
        <taxon>Beijerinckiaceae</taxon>
        <taxon>Methylocella</taxon>
    </lineage>
</organism>
<comment type="function">
    <text evidence="1">Catalyzes the initial step of the lipid cycle reactions in the biosynthesis of the cell wall peptidoglycan: transfers peptidoglycan precursor phospho-MurNAc-pentapeptide from UDP-MurNAc-pentapeptide onto the lipid carrier undecaprenyl phosphate, yielding undecaprenyl-pyrophosphoryl-MurNAc-pentapeptide, known as lipid I.</text>
</comment>
<comment type="catalytic activity">
    <reaction evidence="1">
        <text>UDP-N-acetyl-alpha-D-muramoyl-L-alanyl-gamma-D-glutamyl-meso-2,6-diaminopimeloyl-D-alanyl-D-alanine + di-trans,octa-cis-undecaprenyl phosphate = di-trans,octa-cis-undecaprenyl diphospho-N-acetyl-alpha-D-muramoyl-L-alanyl-D-glutamyl-meso-2,6-diaminopimeloyl-D-alanyl-D-alanine + UMP</text>
        <dbReference type="Rhea" id="RHEA:28386"/>
        <dbReference type="ChEBI" id="CHEBI:57865"/>
        <dbReference type="ChEBI" id="CHEBI:60392"/>
        <dbReference type="ChEBI" id="CHEBI:61386"/>
        <dbReference type="ChEBI" id="CHEBI:61387"/>
        <dbReference type="EC" id="2.7.8.13"/>
    </reaction>
</comment>
<comment type="cofactor">
    <cofactor evidence="1">
        <name>Mg(2+)</name>
        <dbReference type="ChEBI" id="CHEBI:18420"/>
    </cofactor>
</comment>
<comment type="pathway">
    <text evidence="1">Cell wall biogenesis; peptidoglycan biosynthesis.</text>
</comment>
<comment type="subcellular location">
    <subcellularLocation>
        <location evidence="1">Cell inner membrane</location>
        <topology evidence="1">Multi-pass membrane protein</topology>
    </subcellularLocation>
</comment>
<comment type="similarity">
    <text evidence="1">Belongs to the glycosyltransferase 4 family. MraY subfamily.</text>
</comment>
<keyword id="KW-0131">Cell cycle</keyword>
<keyword id="KW-0132">Cell division</keyword>
<keyword id="KW-0997">Cell inner membrane</keyword>
<keyword id="KW-1003">Cell membrane</keyword>
<keyword id="KW-0133">Cell shape</keyword>
<keyword id="KW-0961">Cell wall biogenesis/degradation</keyword>
<keyword id="KW-0460">Magnesium</keyword>
<keyword id="KW-0472">Membrane</keyword>
<keyword id="KW-0479">Metal-binding</keyword>
<keyword id="KW-0573">Peptidoglycan synthesis</keyword>
<keyword id="KW-1185">Reference proteome</keyword>
<keyword id="KW-0808">Transferase</keyword>
<keyword id="KW-0812">Transmembrane</keyword>
<keyword id="KW-1133">Transmembrane helix</keyword>
<gene>
    <name evidence="1" type="primary">mraY</name>
    <name type="ordered locus">Msil_3482</name>
</gene>
<evidence type="ECO:0000255" key="1">
    <source>
        <dbReference type="HAMAP-Rule" id="MF_00038"/>
    </source>
</evidence>
<feature type="chain" id="PRO_1000117186" description="Phospho-N-acetylmuramoyl-pentapeptide-transferase">
    <location>
        <begin position="1"/>
        <end position="360"/>
    </location>
</feature>
<feature type="transmembrane region" description="Helical" evidence="1">
    <location>
        <begin position="27"/>
        <end position="47"/>
    </location>
</feature>
<feature type="transmembrane region" description="Helical" evidence="1">
    <location>
        <begin position="74"/>
        <end position="94"/>
    </location>
</feature>
<feature type="transmembrane region" description="Helical" evidence="1">
    <location>
        <begin position="99"/>
        <end position="119"/>
    </location>
</feature>
<feature type="transmembrane region" description="Helical" evidence="1">
    <location>
        <begin position="135"/>
        <end position="155"/>
    </location>
</feature>
<feature type="transmembrane region" description="Helical" evidence="1">
    <location>
        <begin position="165"/>
        <end position="185"/>
    </location>
</feature>
<feature type="transmembrane region" description="Helical" evidence="1">
    <location>
        <begin position="199"/>
        <end position="219"/>
    </location>
</feature>
<feature type="transmembrane region" description="Helical" evidence="1">
    <location>
        <begin position="236"/>
        <end position="256"/>
    </location>
</feature>
<feature type="transmembrane region" description="Helical" evidence="1">
    <location>
        <begin position="263"/>
        <end position="283"/>
    </location>
</feature>
<feature type="transmembrane region" description="Helical" evidence="1">
    <location>
        <begin position="288"/>
        <end position="308"/>
    </location>
</feature>
<feature type="transmembrane region" description="Helical" evidence="1">
    <location>
        <begin position="337"/>
        <end position="357"/>
    </location>
</feature>
<protein>
    <recommendedName>
        <fullName evidence="1">Phospho-N-acetylmuramoyl-pentapeptide-transferase</fullName>
        <ecNumber evidence="1">2.7.8.13</ecNumber>
    </recommendedName>
    <alternativeName>
        <fullName evidence="1">UDP-MurNAc-pentapeptide phosphotransferase</fullName>
    </alternativeName>
</protein>
<accession>B8ETL9</accession>
<name>MRAY_METSB</name>
<dbReference type="EC" id="2.7.8.13" evidence="1"/>
<dbReference type="EMBL" id="CP001280">
    <property type="protein sequence ID" value="ACK52371.1"/>
    <property type="molecule type" value="Genomic_DNA"/>
</dbReference>
<dbReference type="RefSeq" id="WP_012592440.1">
    <property type="nucleotide sequence ID" value="NC_011666.1"/>
</dbReference>
<dbReference type="SMR" id="B8ETL9"/>
<dbReference type="STRING" id="395965.Msil_3482"/>
<dbReference type="KEGG" id="msl:Msil_3482"/>
<dbReference type="eggNOG" id="COG0472">
    <property type="taxonomic scope" value="Bacteria"/>
</dbReference>
<dbReference type="HOGENOM" id="CLU_023982_0_0_5"/>
<dbReference type="OrthoDB" id="9805475at2"/>
<dbReference type="UniPathway" id="UPA00219"/>
<dbReference type="Proteomes" id="UP000002257">
    <property type="component" value="Chromosome"/>
</dbReference>
<dbReference type="GO" id="GO:0005886">
    <property type="term" value="C:plasma membrane"/>
    <property type="evidence" value="ECO:0007669"/>
    <property type="project" value="UniProtKB-SubCell"/>
</dbReference>
<dbReference type="GO" id="GO:0046872">
    <property type="term" value="F:metal ion binding"/>
    <property type="evidence" value="ECO:0007669"/>
    <property type="project" value="UniProtKB-KW"/>
</dbReference>
<dbReference type="GO" id="GO:0008963">
    <property type="term" value="F:phospho-N-acetylmuramoyl-pentapeptide-transferase activity"/>
    <property type="evidence" value="ECO:0007669"/>
    <property type="project" value="UniProtKB-UniRule"/>
</dbReference>
<dbReference type="GO" id="GO:0051992">
    <property type="term" value="F:UDP-N-acetylmuramoyl-L-alanyl-D-glutamyl-meso-2,6-diaminopimelyl-D-alanyl-D-alanine:undecaprenyl-phosphate transferase activity"/>
    <property type="evidence" value="ECO:0007669"/>
    <property type="project" value="RHEA"/>
</dbReference>
<dbReference type="GO" id="GO:0051301">
    <property type="term" value="P:cell division"/>
    <property type="evidence" value="ECO:0007669"/>
    <property type="project" value="UniProtKB-KW"/>
</dbReference>
<dbReference type="GO" id="GO:0071555">
    <property type="term" value="P:cell wall organization"/>
    <property type="evidence" value="ECO:0007669"/>
    <property type="project" value="UniProtKB-KW"/>
</dbReference>
<dbReference type="GO" id="GO:0009252">
    <property type="term" value="P:peptidoglycan biosynthetic process"/>
    <property type="evidence" value="ECO:0007669"/>
    <property type="project" value="UniProtKB-UniRule"/>
</dbReference>
<dbReference type="GO" id="GO:0008360">
    <property type="term" value="P:regulation of cell shape"/>
    <property type="evidence" value="ECO:0007669"/>
    <property type="project" value="UniProtKB-KW"/>
</dbReference>
<dbReference type="CDD" id="cd06852">
    <property type="entry name" value="GT_MraY"/>
    <property type="match status" value="1"/>
</dbReference>
<dbReference type="HAMAP" id="MF_00038">
    <property type="entry name" value="MraY"/>
    <property type="match status" value="1"/>
</dbReference>
<dbReference type="InterPro" id="IPR000715">
    <property type="entry name" value="Glycosyl_transferase_4"/>
</dbReference>
<dbReference type="InterPro" id="IPR003524">
    <property type="entry name" value="PNAcMuramoyl-5peptid_Trfase"/>
</dbReference>
<dbReference type="InterPro" id="IPR018480">
    <property type="entry name" value="PNAcMuramoyl-5peptid_Trfase_CS"/>
</dbReference>
<dbReference type="NCBIfam" id="TIGR00445">
    <property type="entry name" value="mraY"/>
    <property type="match status" value="1"/>
</dbReference>
<dbReference type="PANTHER" id="PTHR22926">
    <property type="entry name" value="PHOSPHO-N-ACETYLMURAMOYL-PENTAPEPTIDE-TRANSFERASE"/>
    <property type="match status" value="1"/>
</dbReference>
<dbReference type="PANTHER" id="PTHR22926:SF5">
    <property type="entry name" value="PHOSPHO-N-ACETYLMURAMOYL-PENTAPEPTIDE-TRANSFERASE HOMOLOG"/>
    <property type="match status" value="1"/>
</dbReference>
<dbReference type="Pfam" id="PF00953">
    <property type="entry name" value="Glycos_transf_4"/>
    <property type="match status" value="1"/>
</dbReference>
<dbReference type="Pfam" id="PF10555">
    <property type="entry name" value="MraY_sig1"/>
    <property type="match status" value="1"/>
</dbReference>
<dbReference type="PROSITE" id="PS01347">
    <property type="entry name" value="MRAY_1"/>
    <property type="match status" value="1"/>
</dbReference>
<dbReference type="PROSITE" id="PS01348">
    <property type="entry name" value="MRAY_2"/>
    <property type="match status" value="1"/>
</dbReference>
<proteinExistence type="inferred from homology"/>